<evidence type="ECO:0000250" key="1"/>
<evidence type="ECO:0000255" key="2"/>
<evidence type="ECO:0000305" key="3"/>
<proteinExistence type="evidence at transcript level"/>
<reference key="1">
    <citation type="journal article" date="2001" name="Mol. Biol. Evol.">
        <title>Mechanisms for evolving hypervariability: the case of conopeptides.</title>
        <authorList>
            <person name="Conticello S.G."/>
            <person name="Gilad Y."/>
            <person name="Avidan N."/>
            <person name="Ben-Asher E."/>
            <person name="Levy Z."/>
            <person name="Fainzilber M."/>
        </authorList>
    </citation>
    <scope>NUCLEOTIDE SEQUENCE [MRNA]</scope>
    <source>
        <tissue>Venom duct</tissue>
    </source>
</reference>
<accession>Q9BP97</accession>
<keyword id="KW-0165">Cleavage on pair of basic residues</keyword>
<keyword id="KW-1015">Disulfide bond</keyword>
<keyword id="KW-0960">Knottin</keyword>
<keyword id="KW-0528">Neurotoxin</keyword>
<keyword id="KW-0964">Secreted</keyword>
<keyword id="KW-0732">Signal</keyword>
<keyword id="KW-0800">Toxin</keyword>
<protein>
    <recommendedName>
        <fullName>Conotoxin VnMKLT2-021</fullName>
    </recommendedName>
    <alternativeName>
        <fullName>Conotoxin VnMKLT2-0222</fullName>
    </alternativeName>
</protein>
<organism>
    <name type="scientific">Conus ventricosus</name>
    <name type="common">Mediterranean cone</name>
    <dbReference type="NCBI Taxonomy" id="117992"/>
    <lineage>
        <taxon>Eukaryota</taxon>
        <taxon>Metazoa</taxon>
        <taxon>Spiralia</taxon>
        <taxon>Lophotrochozoa</taxon>
        <taxon>Mollusca</taxon>
        <taxon>Gastropoda</taxon>
        <taxon>Caenogastropoda</taxon>
        <taxon>Neogastropoda</taxon>
        <taxon>Conoidea</taxon>
        <taxon>Conidae</taxon>
        <taxon>Conus</taxon>
        <taxon>Lautoconus</taxon>
    </lineage>
</organism>
<dbReference type="EMBL" id="AF215041">
    <property type="protein sequence ID" value="AAG60469.1"/>
    <property type="molecule type" value="mRNA"/>
</dbReference>
<dbReference type="SMR" id="Q9BP97"/>
<dbReference type="ConoServer" id="728">
    <property type="toxin name" value="Vn6.14 precursor"/>
</dbReference>
<dbReference type="GO" id="GO:0005576">
    <property type="term" value="C:extracellular region"/>
    <property type="evidence" value="ECO:0007669"/>
    <property type="project" value="UniProtKB-SubCell"/>
</dbReference>
<dbReference type="GO" id="GO:0008200">
    <property type="term" value="F:ion channel inhibitor activity"/>
    <property type="evidence" value="ECO:0007669"/>
    <property type="project" value="InterPro"/>
</dbReference>
<dbReference type="GO" id="GO:0090729">
    <property type="term" value="F:toxin activity"/>
    <property type="evidence" value="ECO:0007669"/>
    <property type="project" value="UniProtKB-KW"/>
</dbReference>
<dbReference type="InterPro" id="IPR004214">
    <property type="entry name" value="Conotoxin"/>
</dbReference>
<dbReference type="Pfam" id="PF02950">
    <property type="entry name" value="Conotoxin"/>
    <property type="match status" value="1"/>
</dbReference>
<comment type="subcellular location">
    <subcellularLocation>
        <location evidence="1">Secreted</location>
    </subcellularLocation>
</comment>
<comment type="tissue specificity">
    <text>Expressed by the venom duct.</text>
</comment>
<comment type="domain">
    <text evidence="1">The presence of a 'disulfide through disulfide knot' structurally defines this protein as a knottin.</text>
</comment>
<comment type="domain">
    <text>The cysteine framework is VI/VII (C-C-CC-C-C).</text>
</comment>
<comment type="similarity">
    <text evidence="3">Belongs to the conotoxin O1 superfamily.</text>
</comment>
<feature type="signal peptide" evidence="2">
    <location>
        <begin position="1"/>
        <end position="22"/>
    </location>
</feature>
<feature type="propeptide" id="PRO_0000404736" evidence="1">
    <location>
        <begin position="23"/>
        <end position="45"/>
    </location>
</feature>
<feature type="peptide" id="PRO_0000404737" description="Conotoxin VnMKLT2-021">
    <location>
        <begin position="48"/>
        <end position="72"/>
    </location>
</feature>
<feature type="disulfide bond" evidence="1">
    <location>
        <begin position="48"/>
        <end position="62"/>
    </location>
</feature>
<feature type="disulfide bond" evidence="1">
    <location>
        <begin position="55"/>
        <end position="66"/>
    </location>
</feature>
<feature type="disulfide bond" evidence="1">
    <location>
        <begin position="61"/>
        <end position="71"/>
    </location>
</feature>
<name>O164A_CONVE</name>
<sequence>MKLTCVLIVAVLFLTACQLTTAASYARSERQHPDLGSSDQNSKLTKRCLASGETCWRDTSCCSFSCTNNVCF</sequence>